<protein>
    <recommendedName>
        <fullName evidence="1">UvrABC system protein B</fullName>
        <shortName evidence="1">Protein UvrB</shortName>
    </recommendedName>
    <alternativeName>
        <fullName evidence="1">Excinuclease ABC subunit B</fullName>
    </alternativeName>
</protein>
<gene>
    <name evidence="1" type="primary">uvrB</name>
    <name type="ordered locus">BCE_5272</name>
</gene>
<keyword id="KW-0067">ATP-binding</keyword>
<keyword id="KW-0963">Cytoplasm</keyword>
<keyword id="KW-0227">DNA damage</keyword>
<keyword id="KW-0228">DNA excision</keyword>
<keyword id="KW-0234">DNA repair</keyword>
<keyword id="KW-0267">Excision nuclease</keyword>
<keyword id="KW-0547">Nucleotide-binding</keyword>
<keyword id="KW-0742">SOS response</keyword>
<proteinExistence type="inferred from homology"/>
<name>UVRB_BACC1</name>
<sequence>MERQFEIVSAYSPQGDQPVAIEKLVEGINSGKKKQVLLGATGTGKTFTISNVIKEVQKPTLVMAHNKTLAGQLYSELKDFFPNNAVEYFVSYYDYYQPEAYVPQTDTFIEKDAQINDEIDKLRHSATSALFERDDVIIVASVSCIYGLGSPEEYRELVVSLRVGMEKDRNQLLRELVDVQYGRNDIDFKRGTFRVRGDVVEIFPASLDEHCIRIEFFGDEIDRIREVNALTGEVLAERDHVAIFPASHFVTREEKMKVAIENIEKELEERLKELNDNGKLLEAQRIEQRTRYDLEMMREMGFCSGIENYSRHLTLRPAGATPYTLLDYFPKDFLIVMDESHVSVPQVRAMYNGDQARKQVLVDHGFRLPSALDNRPLTFDEFEEKTNQVIYVSATPGPYELEQSPEVIEQIIRPTGLLDPPIDIRPIEGQIDDLLGEIQDRIAKNERVLITTLTKKMSEDLTDYLKDVGIKVNYLHSEVKTLERIEIIRDLRLGKFDVLVGINLLREGLDIPEVSLVAILDADKEGFLRSERSLIQTIGRAARNENGRVIMYADRITRSMEIAIEETKRRRSIQEAYNEEHGITPKTIQKGVRDVIRATTAAEETETYEATPAKKMTKKEREKTIAKMEAEMKEAAKALDFERAAELRDLLLELKAEG</sequence>
<accession>Q72XV1</accession>
<organism>
    <name type="scientific">Bacillus cereus (strain ATCC 10987 / NRS 248)</name>
    <dbReference type="NCBI Taxonomy" id="222523"/>
    <lineage>
        <taxon>Bacteria</taxon>
        <taxon>Bacillati</taxon>
        <taxon>Bacillota</taxon>
        <taxon>Bacilli</taxon>
        <taxon>Bacillales</taxon>
        <taxon>Bacillaceae</taxon>
        <taxon>Bacillus</taxon>
        <taxon>Bacillus cereus group</taxon>
    </lineage>
</organism>
<comment type="function">
    <text evidence="1">The UvrABC repair system catalyzes the recognition and processing of DNA lesions. A damage recognition complex composed of 2 UvrA and 2 UvrB subunits scans DNA for abnormalities. Upon binding of the UvrA(2)B(2) complex to a putative damaged site, the DNA wraps around one UvrB monomer. DNA wrap is dependent on ATP binding by UvrB and probably causes local melting of the DNA helix, facilitating insertion of UvrB beta-hairpin between the DNA strands. Then UvrB probes one DNA strand for the presence of a lesion. If a lesion is found the UvrA subunits dissociate and the UvrB-DNA preincision complex is formed. This complex is subsequently bound by UvrC and the second UvrB is released. If no lesion is found, the DNA wraps around the other UvrB subunit that will check the other stand for damage.</text>
</comment>
<comment type="subunit">
    <text evidence="1">Forms a heterotetramer with UvrA during the search for lesions. Interacts with UvrC in an incision complex.</text>
</comment>
<comment type="subcellular location">
    <subcellularLocation>
        <location evidence="1">Cytoplasm</location>
    </subcellularLocation>
</comment>
<comment type="domain">
    <text evidence="1">The beta-hairpin motif is involved in DNA binding.</text>
</comment>
<comment type="similarity">
    <text evidence="1">Belongs to the UvrB family.</text>
</comment>
<reference key="1">
    <citation type="journal article" date="2004" name="Nucleic Acids Res.">
        <title>The genome sequence of Bacillus cereus ATCC 10987 reveals metabolic adaptations and a large plasmid related to Bacillus anthracis pXO1.</title>
        <authorList>
            <person name="Rasko D.A."/>
            <person name="Ravel J."/>
            <person name="Oekstad O.A."/>
            <person name="Helgason E."/>
            <person name="Cer R.Z."/>
            <person name="Jiang L."/>
            <person name="Shores K.A."/>
            <person name="Fouts D.E."/>
            <person name="Tourasse N.J."/>
            <person name="Angiuoli S.V."/>
            <person name="Kolonay J.F."/>
            <person name="Nelson W.C."/>
            <person name="Kolstoe A.-B."/>
            <person name="Fraser C.M."/>
            <person name="Read T.D."/>
        </authorList>
    </citation>
    <scope>NUCLEOTIDE SEQUENCE [LARGE SCALE GENOMIC DNA]</scope>
    <source>
        <strain>ATCC 10987 / NRS 248</strain>
    </source>
</reference>
<feature type="chain" id="PRO_0000227280" description="UvrABC system protein B">
    <location>
        <begin position="1"/>
        <end position="658"/>
    </location>
</feature>
<feature type="domain" description="Helicase ATP-binding" evidence="1">
    <location>
        <begin position="26"/>
        <end position="413"/>
    </location>
</feature>
<feature type="domain" description="Helicase C-terminal" evidence="1">
    <location>
        <begin position="430"/>
        <end position="596"/>
    </location>
</feature>
<feature type="domain" description="UVR" evidence="1">
    <location>
        <begin position="622"/>
        <end position="657"/>
    </location>
</feature>
<feature type="short sequence motif" description="Beta-hairpin">
    <location>
        <begin position="92"/>
        <end position="115"/>
    </location>
</feature>
<feature type="binding site" evidence="1">
    <location>
        <begin position="39"/>
        <end position="46"/>
    </location>
    <ligand>
        <name>ATP</name>
        <dbReference type="ChEBI" id="CHEBI:30616"/>
    </ligand>
</feature>
<evidence type="ECO:0000255" key="1">
    <source>
        <dbReference type="HAMAP-Rule" id="MF_00204"/>
    </source>
</evidence>
<dbReference type="EMBL" id="AE017194">
    <property type="protein sequence ID" value="AAS44173.1"/>
    <property type="molecule type" value="Genomic_DNA"/>
</dbReference>
<dbReference type="SMR" id="Q72XV1"/>
<dbReference type="KEGG" id="bca:BCE_5272"/>
<dbReference type="HOGENOM" id="CLU_009621_2_1_9"/>
<dbReference type="Proteomes" id="UP000002527">
    <property type="component" value="Chromosome"/>
</dbReference>
<dbReference type="GO" id="GO:0005737">
    <property type="term" value="C:cytoplasm"/>
    <property type="evidence" value="ECO:0007669"/>
    <property type="project" value="UniProtKB-SubCell"/>
</dbReference>
<dbReference type="GO" id="GO:0009380">
    <property type="term" value="C:excinuclease repair complex"/>
    <property type="evidence" value="ECO:0007669"/>
    <property type="project" value="InterPro"/>
</dbReference>
<dbReference type="GO" id="GO:0005524">
    <property type="term" value="F:ATP binding"/>
    <property type="evidence" value="ECO:0007669"/>
    <property type="project" value="UniProtKB-UniRule"/>
</dbReference>
<dbReference type="GO" id="GO:0016887">
    <property type="term" value="F:ATP hydrolysis activity"/>
    <property type="evidence" value="ECO:0007669"/>
    <property type="project" value="InterPro"/>
</dbReference>
<dbReference type="GO" id="GO:0003677">
    <property type="term" value="F:DNA binding"/>
    <property type="evidence" value="ECO:0007669"/>
    <property type="project" value="UniProtKB-UniRule"/>
</dbReference>
<dbReference type="GO" id="GO:0009381">
    <property type="term" value="F:excinuclease ABC activity"/>
    <property type="evidence" value="ECO:0007669"/>
    <property type="project" value="UniProtKB-UniRule"/>
</dbReference>
<dbReference type="GO" id="GO:0006289">
    <property type="term" value="P:nucleotide-excision repair"/>
    <property type="evidence" value="ECO:0007669"/>
    <property type="project" value="UniProtKB-UniRule"/>
</dbReference>
<dbReference type="GO" id="GO:0009432">
    <property type="term" value="P:SOS response"/>
    <property type="evidence" value="ECO:0007669"/>
    <property type="project" value="UniProtKB-UniRule"/>
</dbReference>
<dbReference type="CDD" id="cd17916">
    <property type="entry name" value="DEXHc_UvrB"/>
    <property type="match status" value="1"/>
</dbReference>
<dbReference type="CDD" id="cd18790">
    <property type="entry name" value="SF2_C_UvrB"/>
    <property type="match status" value="1"/>
</dbReference>
<dbReference type="Gene3D" id="6.10.140.240">
    <property type="match status" value="1"/>
</dbReference>
<dbReference type="Gene3D" id="3.40.50.300">
    <property type="entry name" value="P-loop containing nucleotide triphosphate hydrolases"/>
    <property type="match status" value="3"/>
</dbReference>
<dbReference type="Gene3D" id="4.10.860.10">
    <property type="entry name" value="UVR domain"/>
    <property type="match status" value="1"/>
</dbReference>
<dbReference type="HAMAP" id="MF_00204">
    <property type="entry name" value="UvrB"/>
    <property type="match status" value="1"/>
</dbReference>
<dbReference type="InterPro" id="IPR006935">
    <property type="entry name" value="Helicase/UvrB_N"/>
</dbReference>
<dbReference type="InterPro" id="IPR014001">
    <property type="entry name" value="Helicase_ATP-bd"/>
</dbReference>
<dbReference type="InterPro" id="IPR001650">
    <property type="entry name" value="Helicase_C-like"/>
</dbReference>
<dbReference type="InterPro" id="IPR027417">
    <property type="entry name" value="P-loop_NTPase"/>
</dbReference>
<dbReference type="InterPro" id="IPR001943">
    <property type="entry name" value="UVR_dom"/>
</dbReference>
<dbReference type="InterPro" id="IPR036876">
    <property type="entry name" value="UVR_dom_sf"/>
</dbReference>
<dbReference type="InterPro" id="IPR004807">
    <property type="entry name" value="UvrB"/>
</dbReference>
<dbReference type="InterPro" id="IPR041471">
    <property type="entry name" value="UvrB_inter"/>
</dbReference>
<dbReference type="InterPro" id="IPR024759">
    <property type="entry name" value="UvrB_YAD/RRR_dom"/>
</dbReference>
<dbReference type="NCBIfam" id="NF003673">
    <property type="entry name" value="PRK05298.1"/>
    <property type="match status" value="1"/>
</dbReference>
<dbReference type="NCBIfam" id="TIGR00631">
    <property type="entry name" value="uvrb"/>
    <property type="match status" value="1"/>
</dbReference>
<dbReference type="PANTHER" id="PTHR24029">
    <property type="entry name" value="UVRABC SYSTEM PROTEIN B"/>
    <property type="match status" value="1"/>
</dbReference>
<dbReference type="PANTHER" id="PTHR24029:SF0">
    <property type="entry name" value="UVRABC SYSTEM PROTEIN B"/>
    <property type="match status" value="1"/>
</dbReference>
<dbReference type="Pfam" id="PF00271">
    <property type="entry name" value="Helicase_C"/>
    <property type="match status" value="1"/>
</dbReference>
<dbReference type="Pfam" id="PF04851">
    <property type="entry name" value="ResIII"/>
    <property type="match status" value="1"/>
</dbReference>
<dbReference type="Pfam" id="PF02151">
    <property type="entry name" value="UVR"/>
    <property type="match status" value="1"/>
</dbReference>
<dbReference type="Pfam" id="PF12344">
    <property type="entry name" value="UvrB"/>
    <property type="match status" value="1"/>
</dbReference>
<dbReference type="Pfam" id="PF17757">
    <property type="entry name" value="UvrB_inter"/>
    <property type="match status" value="1"/>
</dbReference>
<dbReference type="SMART" id="SM00487">
    <property type="entry name" value="DEXDc"/>
    <property type="match status" value="1"/>
</dbReference>
<dbReference type="SMART" id="SM00490">
    <property type="entry name" value="HELICc"/>
    <property type="match status" value="1"/>
</dbReference>
<dbReference type="SUPFAM" id="SSF46600">
    <property type="entry name" value="C-terminal UvrC-binding domain of UvrB"/>
    <property type="match status" value="1"/>
</dbReference>
<dbReference type="SUPFAM" id="SSF52540">
    <property type="entry name" value="P-loop containing nucleoside triphosphate hydrolases"/>
    <property type="match status" value="2"/>
</dbReference>
<dbReference type="PROSITE" id="PS51192">
    <property type="entry name" value="HELICASE_ATP_BIND_1"/>
    <property type="match status" value="1"/>
</dbReference>
<dbReference type="PROSITE" id="PS51194">
    <property type="entry name" value="HELICASE_CTER"/>
    <property type="match status" value="1"/>
</dbReference>
<dbReference type="PROSITE" id="PS50151">
    <property type="entry name" value="UVR"/>
    <property type="match status" value="1"/>
</dbReference>